<sequence length="183" mass="19738">MKLIVVAALIGVCAGGALPGHVAPQYYYGGPGYYPHGRPSPGVERNAAILRSDSEVTSQGFQYVYDTENGIHGEAAGVEANGIQSQGAFSYTGDDGQQYAVKYTADANGFQAQGAHLPTPPPIPDAIVRSIEENARAEAAGVYNEGSYNVYNNQAAFANRHQYPYQYQSNRPYNTLGYHGYKY</sequence>
<proteinExistence type="evidence at protein level"/>
<reference evidence="5 6" key="1">
    <citation type="journal article" date="2008" name="Toxicon">
        <title>Immunochemical and proteomic technologies as tools for unravelling toxins involved in envenoming by accidental contact with Lonomia obliqua caterpillars.</title>
        <authorList>
            <person name="Ricci-Silva M.E."/>
            <person name="Valente R.H."/>
            <person name="Leon I.R."/>
            <person name="Tambourgi D.V."/>
            <person name="Ramos O.H.P."/>
            <person name="Perales J."/>
            <person name="Chudzinski-Tavassi A.M."/>
        </authorList>
    </citation>
    <scope>NUCLEOTIDE SEQUENCE [GENOMIC DNA]</scope>
    <scope>PROTEIN SEQUENCE OF 16-38; 46-51; 90-102 AND 130-182</scope>
    <source>
        <tissue evidence="3">Larval bristle</tissue>
    </source>
</reference>
<evidence type="ECO:0000255" key="1"/>
<evidence type="ECO:0000255" key="2">
    <source>
        <dbReference type="PROSITE-ProRule" id="PRU00497"/>
    </source>
</evidence>
<evidence type="ECO:0000269" key="3">
    <source>
    </source>
</evidence>
<evidence type="ECO:0000303" key="4">
    <source>
    </source>
</evidence>
<evidence type="ECO:0000305" key="5"/>
<evidence type="ECO:0000312" key="6">
    <source>
        <dbReference type="EMBL" id="ABU88848.1"/>
    </source>
</evidence>
<organism>
    <name type="scientific">Lonomia obliqua</name>
    <name type="common">Moth</name>
    <dbReference type="NCBI Taxonomy" id="304329"/>
    <lineage>
        <taxon>Eukaryota</taxon>
        <taxon>Metazoa</taxon>
        <taxon>Ecdysozoa</taxon>
        <taxon>Arthropoda</taxon>
        <taxon>Hexapoda</taxon>
        <taxon>Insecta</taxon>
        <taxon>Pterygota</taxon>
        <taxon>Neoptera</taxon>
        <taxon>Endopterygota</taxon>
        <taxon>Lepidoptera</taxon>
        <taxon>Glossata</taxon>
        <taxon>Ditrysia</taxon>
        <taxon>Bombycoidea</taxon>
        <taxon>Saturniidae</taxon>
        <taxon>Hemileucinae</taxon>
        <taxon>Lonomia</taxon>
    </lineage>
</organism>
<keyword id="KW-0193">Cuticle</keyword>
<keyword id="KW-0903">Direct protein sequencing</keyword>
<keyword id="KW-0732">Signal</keyword>
<name>CU02_LONON</name>
<dbReference type="EMBL" id="EU106116">
    <property type="protein sequence ID" value="ABU88848.1"/>
    <property type="molecule type" value="Genomic_DNA"/>
</dbReference>
<dbReference type="GO" id="GO:0062129">
    <property type="term" value="C:chitin-based extracellular matrix"/>
    <property type="evidence" value="ECO:0007669"/>
    <property type="project" value="TreeGrafter"/>
</dbReference>
<dbReference type="GO" id="GO:0008010">
    <property type="term" value="F:structural constituent of chitin-based larval cuticle"/>
    <property type="evidence" value="ECO:0007669"/>
    <property type="project" value="TreeGrafter"/>
</dbReference>
<dbReference type="InterPro" id="IPR031311">
    <property type="entry name" value="CHIT_BIND_RR_consensus"/>
</dbReference>
<dbReference type="InterPro" id="IPR050468">
    <property type="entry name" value="Cuticle_Struct_Prot"/>
</dbReference>
<dbReference type="InterPro" id="IPR000618">
    <property type="entry name" value="Insect_cuticle"/>
</dbReference>
<dbReference type="PANTHER" id="PTHR10380">
    <property type="entry name" value="CUTICLE PROTEIN"/>
    <property type="match status" value="1"/>
</dbReference>
<dbReference type="PANTHER" id="PTHR10380:SF173">
    <property type="entry name" value="CUTICULAR PROTEIN 47EF, ISOFORM C-RELATED"/>
    <property type="match status" value="1"/>
</dbReference>
<dbReference type="Pfam" id="PF00379">
    <property type="entry name" value="Chitin_bind_4"/>
    <property type="match status" value="1"/>
</dbReference>
<dbReference type="PRINTS" id="PR00947">
    <property type="entry name" value="CUTICLE"/>
</dbReference>
<dbReference type="PROSITE" id="PS00233">
    <property type="entry name" value="CHIT_BIND_RR_1"/>
    <property type="match status" value="1"/>
</dbReference>
<dbReference type="PROSITE" id="PS51155">
    <property type="entry name" value="CHIT_BIND_RR_2"/>
    <property type="match status" value="1"/>
</dbReference>
<feature type="signal peptide" evidence="3">
    <location>
        <begin position="1"/>
        <end position="15"/>
    </location>
</feature>
<feature type="chain" id="PRO_0000296380" description="Cuticle protein 2" evidence="1">
    <location>
        <begin position="16"/>
        <end position="183"/>
    </location>
</feature>
<feature type="domain" description="Chitin-binding type R&amp;R" evidence="2">
    <location>
        <begin position="58"/>
        <end position="121"/>
    </location>
</feature>
<protein>
    <recommendedName>
        <fullName evidence="4">Cuticle protein 2</fullName>
    </recommendedName>
</protein>
<accession>P85196</accession>
<accession>A7XZD8</accession>